<protein>
    <recommendedName>
        <fullName evidence="1">Large ribosomal subunit protein uL2</fullName>
    </recommendedName>
    <alternativeName>
        <fullName evidence="3">50S ribosomal protein L2</fullName>
    </alternativeName>
</protein>
<accession>Q98N54</accession>
<organism>
    <name type="scientific">Mesorhizobium japonicum (strain LMG 29417 / CECT 9101 / MAFF 303099)</name>
    <name type="common">Mesorhizobium loti (strain MAFF 303099)</name>
    <dbReference type="NCBI Taxonomy" id="266835"/>
    <lineage>
        <taxon>Bacteria</taxon>
        <taxon>Pseudomonadati</taxon>
        <taxon>Pseudomonadota</taxon>
        <taxon>Alphaproteobacteria</taxon>
        <taxon>Hyphomicrobiales</taxon>
        <taxon>Phyllobacteriaceae</taxon>
        <taxon>Mesorhizobium</taxon>
    </lineage>
</organism>
<keyword id="KW-0687">Ribonucleoprotein</keyword>
<keyword id="KW-0689">Ribosomal protein</keyword>
<keyword id="KW-0694">RNA-binding</keyword>
<keyword id="KW-0699">rRNA-binding</keyword>
<gene>
    <name evidence="1" type="primary">rplB</name>
    <name type="ordered locus">mlr0295</name>
</gene>
<proteinExistence type="inferred from homology"/>
<evidence type="ECO:0000255" key="1">
    <source>
        <dbReference type="HAMAP-Rule" id="MF_01320"/>
    </source>
</evidence>
<evidence type="ECO:0000256" key="2">
    <source>
        <dbReference type="SAM" id="MobiDB-lite"/>
    </source>
</evidence>
<evidence type="ECO:0000305" key="3"/>
<dbReference type="EMBL" id="BA000012">
    <property type="protein sequence ID" value="BAB47909.1"/>
    <property type="molecule type" value="Genomic_DNA"/>
</dbReference>
<dbReference type="RefSeq" id="WP_010909276.1">
    <property type="nucleotide sequence ID" value="NC_002678.2"/>
</dbReference>
<dbReference type="SMR" id="Q98N54"/>
<dbReference type="GeneID" id="66684213"/>
<dbReference type="KEGG" id="mlo:mlr0295"/>
<dbReference type="eggNOG" id="COG0090">
    <property type="taxonomic scope" value="Bacteria"/>
</dbReference>
<dbReference type="HOGENOM" id="CLU_036235_2_1_5"/>
<dbReference type="Proteomes" id="UP000000552">
    <property type="component" value="Chromosome"/>
</dbReference>
<dbReference type="GO" id="GO:0015934">
    <property type="term" value="C:large ribosomal subunit"/>
    <property type="evidence" value="ECO:0007669"/>
    <property type="project" value="InterPro"/>
</dbReference>
<dbReference type="GO" id="GO:0019843">
    <property type="term" value="F:rRNA binding"/>
    <property type="evidence" value="ECO:0007669"/>
    <property type="project" value="UniProtKB-UniRule"/>
</dbReference>
<dbReference type="GO" id="GO:0003735">
    <property type="term" value="F:structural constituent of ribosome"/>
    <property type="evidence" value="ECO:0007669"/>
    <property type="project" value="InterPro"/>
</dbReference>
<dbReference type="GO" id="GO:0016740">
    <property type="term" value="F:transferase activity"/>
    <property type="evidence" value="ECO:0007669"/>
    <property type="project" value="InterPro"/>
</dbReference>
<dbReference type="GO" id="GO:0002181">
    <property type="term" value="P:cytoplasmic translation"/>
    <property type="evidence" value="ECO:0007669"/>
    <property type="project" value="TreeGrafter"/>
</dbReference>
<dbReference type="FunFam" id="2.30.30.30:FF:000055">
    <property type="entry name" value="50S ribosomal protein L2"/>
    <property type="match status" value="1"/>
</dbReference>
<dbReference type="FunFam" id="2.40.50.140:FF:000003">
    <property type="entry name" value="50S ribosomal protein L2"/>
    <property type="match status" value="1"/>
</dbReference>
<dbReference type="FunFam" id="4.10.950.10:FF:000001">
    <property type="entry name" value="50S ribosomal protein L2"/>
    <property type="match status" value="1"/>
</dbReference>
<dbReference type="Gene3D" id="2.30.30.30">
    <property type="match status" value="1"/>
</dbReference>
<dbReference type="Gene3D" id="2.40.50.140">
    <property type="entry name" value="Nucleic acid-binding proteins"/>
    <property type="match status" value="1"/>
</dbReference>
<dbReference type="Gene3D" id="4.10.950.10">
    <property type="entry name" value="Ribosomal protein L2, domain 3"/>
    <property type="match status" value="1"/>
</dbReference>
<dbReference type="HAMAP" id="MF_01320_B">
    <property type="entry name" value="Ribosomal_uL2_B"/>
    <property type="match status" value="1"/>
</dbReference>
<dbReference type="InterPro" id="IPR012340">
    <property type="entry name" value="NA-bd_OB-fold"/>
</dbReference>
<dbReference type="InterPro" id="IPR014722">
    <property type="entry name" value="Rib_uL2_dom2"/>
</dbReference>
<dbReference type="InterPro" id="IPR002171">
    <property type="entry name" value="Ribosomal_uL2"/>
</dbReference>
<dbReference type="InterPro" id="IPR005880">
    <property type="entry name" value="Ribosomal_uL2_bac/org-type"/>
</dbReference>
<dbReference type="InterPro" id="IPR022669">
    <property type="entry name" value="Ribosomal_uL2_C"/>
</dbReference>
<dbReference type="InterPro" id="IPR022671">
    <property type="entry name" value="Ribosomal_uL2_CS"/>
</dbReference>
<dbReference type="InterPro" id="IPR014726">
    <property type="entry name" value="Ribosomal_uL2_dom3"/>
</dbReference>
<dbReference type="InterPro" id="IPR022666">
    <property type="entry name" value="Ribosomal_uL2_RNA-bd_dom"/>
</dbReference>
<dbReference type="InterPro" id="IPR008991">
    <property type="entry name" value="Translation_prot_SH3-like_sf"/>
</dbReference>
<dbReference type="NCBIfam" id="TIGR01171">
    <property type="entry name" value="rplB_bact"/>
    <property type="match status" value="1"/>
</dbReference>
<dbReference type="PANTHER" id="PTHR13691:SF5">
    <property type="entry name" value="LARGE RIBOSOMAL SUBUNIT PROTEIN UL2M"/>
    <property type="match status" value="1"/>
</dbReference>
<dbReference type="PANTHER" id="PTHR13691">
    <property type="entry name" value="RIBOSOMAL PROTEIN L2"/>
    <property type="match status" value="1"/>
</dbReference>
<dbReference type="Pfam" id="PF00181">
    <property type="entry name" value="Ribosomal_L2"/>
    <property type="match status" value="1"/>
</dbReference>
<dbReference type="Pfam" id="PF03947">
    <property type="entry name" value="Ribosomal_L2_C"/>
    <property type="match status" value="1"/>
</dbReference>
<dbReference type="PIRSF" id="PIRSF002158">
    <property type="entry name" value="Ribosomal_L2"/>
    <property type="match status" value="1"/>
</dbReference>
<dbReference type="SMART" id="SM01383">
    <property type="entry name" value="Ribosomal_L2"/>
    <property type="match status" value="1"/>
</dbReference>
<dbReference type="SMART" id="SM01382">
    <property type="entry name" value="Ribosomal_L2_C"/>
    <property type="match status" value="1"/>
</dbReference>
<dbReference type="SUPFAM" id="SSF50249">
    <property type="entry name" value="Nucleic acid-binding proteins"/>
    <property type="match status" value="1"/>
</dbReference>
<dbReference type="SUPFAM" id="SSF50104">
    <property type="entry name" value="Translation proteins SH3-like domain"/>
    <property type="match status" value="1"/>
</dbReference>
<dbReference type="PROSITE" id="PS00467">
    <property type="entry name" value="RIBOSOMAL_L2"/>
    <property type="match status" value="1"/>
</dbReference>
<name>RL2_RHILO</name>
<reference key="1">
    <citation type="journal article" date="2000" name="DNA Res.">
        <title>Complete genome structure of the nitrogen-fixing symbiotic bacterium Mesorhizobium loti.</title>
        <authorList>
            <person name="Kaneko T."/>
            <person name="Nakamura Y."/>
            <person name="Sato S."/>
            <person name="Asamizu E."/>
            <person name="Kato T."/>
            <person name="Sasamoto S."/>
            <person name="Watanabe A."/>
            <person name="Idesawa K."/>
            <person name="Ishikawa A."/>
            <person name="Kawashima K."/>
            <person name="Kimura T."/>
            <person name="Kishida Y."/>
            <person name="Kiyokawa C."/>
            <person name="Kohara M."/>
            <person name="Matsumoto M."/>
            <person name="Matsuno A."/>
            <person name="Mochizuki Y."/>
            <person name="Nakayama S."/>
            <person name="Nakazaki N."/>
            <person name="Shimpo S."/>
            <person name="Sugimoto M."/>
            <person name="Takeuchi C."/>
            <person name="Yamada M."/>
            <person name="Tabata S."/>
        </authorList>
    </citation>
    <scope>NUCLEOTIDE SEQUENCE [LARGE SCALE GENOMIC DNA]</scope>
    <source>
        <strain>LMG 29417 / CECT 9101 / MAFF 303099</strain>
    </source>
</reference>
<sequence>MALKKFNPVTPSTRQLVIVDRSGLYKGKPVKGLTEGLTKSGGRNNYGRITARFIGGGHKRSYRIIDFKRRKFDVVGTVERIEYDPNRTAFIALIKYDDGELSYIIAPQRLAAGDKIVAGEAVDVKPGNAMPLASMPVGTIVHNIELKPGKGGQVARSAGGYAQLVGRDQGMAILRLNSGEQRVVHGSCMATVGAVSNPDHGNINDGKAGRTVWRGKRPHNRGVTMNPVDHPHGGGEGRTSGGRHPVSPWGKPTKGKKTRSNKATDKFILRSRHQRKS</sequence>
<feature type="chain" id="PRO_0000129603" description="Large ribosomal subunit protein uL2">
    <location>
        <begin position="1"/>
        <end position="277"/>
    </location>
</feature>
<feature type="region of interest" description="Disordered" evidence="2">
    <location>
        <begin position="199"/>
        <end position="277"/>
    </location>
</feature>
<comment type="function">
    <text evidence="1">One of the primary rRNA binding proteins. Required for association of the 30S and 50S subunits to form the 70S ribosome, for tRNA binding and peptide bond formation. It has been suggested to have peptidyltransferase activity; this is somewhat controversial. Makes several contacts with the 16S rRNA in the 70S ribosome.</text>
</comment>
<comment type="subunit">
    <text evidence="1">Part of the 50S ribosomal subunit. Forms a bridge to the 30S subunit in the 70S ribosome.</text>
</comment>
<comment type="similarity">
    <text evidence="1">Belongs to the universal ribosomal protein uL2 family.</text>
</comment>